<accession>Q89AP2</accession>
<name>RS2_BUCBP</name>
<protein>
    <recommendedName>
        <fullName evidence="1">Small ribosomal subunit protein uS2</fullName>
    </recommendedName>
    <alternativeName>
        <fullName evidence="2">30S ribosomal protein S2</fullName>
    </alternativeName>
</protein>
<dbReference type="EMBL" id="AE016826">
    <property type="protein sequence ID" value="AAO26945.1"/>
    <property type="molecule type" value="Genomic_DNA"/>
</dbReference>
<dbReference type="RefSeq" id="WP_011091346.1">
    <property type="nucleotide sequence ID" value="NC_004545.1"/>
</dbReference>
<dbReference type="SMR" id="Q89AP2"/>
<dbReference type="STRING" id="224915.bbp_213"/>
<dbReference type="KEGG" id="bab:bbp_213"/>
<dbReference type="eggNOG" id="COG0052">
    <property type="taxonomic scope" value="Bacteria"/>
</dbReference>
<dbReference type="HOGENOM" id="CLU_040318_1_2_6"/>
<dbReference type="OrthoDB" id="9808036at2"/>
<dbReference type="Proteomes" id="UP000000601">
    <property type="component" value="Chromosome"/>
</dbReference>
<dbReference type="GO" id="GO:0022627">
    <property type="term" value="C:cytosolic small ribosomal subunit"/>
    <property type="evidence" value="ECO:0007669"/>
    <property type="project" value="TreeGrafter"/>
</dbReference>
<dbReference type="GO" id="GO:0003735">
    <property type="term" value="F:structural constituent of ribosome"/>
    <property type="evidence" value="ECO:0007669"/>
    <property type="project" value="InterPro"/>
</dbReference>
<dbReference type="GO" id="GO:0006412">
    <property type="term" value="P:translation"/>
    <property type="evidence" value="ECO:0007669"/>
    <property type="project" value="UniProtKB-UniRule"/>
</dbReference>
<dbReference type="CDD" id="cd01425">
    <property type="entry name" value="RPS2"/>
    <property type="match status" value="1"/>
</dbReference>
<dbReference type="FunFam" id="1.10.287.610:FF:000001">
    <property type="entry name" value="30S ribosomal protein S2"/>
    <property type="match status" value="1"/>
</dbReference>
<dbReference type="Gene3D" id="3.40.50.10490">
    <property type="entry name" value="Glucose-6-phosphate isomerase like protein, domain 1"/>
    <property type="match status" value="1"/>
</dbReference>
<dbReference type="Gene3D" id="1.10.287.610">
    <property type="entry name" value="Helix hairpin bin"/>
    <property type="match status" value="1"/>
</dbReference>
<dbReference type="HAMAP" id="MF_00291_B">
    <property type="entry name" value="Ribosomal_uS2_B"/>
    <property type="match status" value="1"/>
</dbReference>
<dbReference type="InterPro" id="IPR001865">
    <property type="entry name" value="Ribosomal_uS2"/>
</dbReference>
<dbReference type="InterPro" id="IPR005706">
    <property type="entry name" value="Ribosomal_uS2_bac/mit/plastid"/>
</dbReference>
<dbReference type="InterPro" id="IPR018130">
    <property type="entry name" value="Ribosomal_uS2_CS"/>
</dbReference>
<dbReference type="InterPro" id="IPR023591">
    <property type="entry name" value="Ribosomal_uS2_flav_dom_sf"/>
</dbReference>
<dbReference type="NCBIfam" id="TIGR01011">
    <property type="entry name" value="rpsB_bact"/>
    <property type="match status" value="1"/>
</dbReference>
<dbReference type="PANTHER" id="PTHR12534">
    <property type="entry name" value="30S RIBOSOMAL PROTEIN S2 PROKARYOTIC AND ORGANELLAR"/>
    <property type="match status" value="1"/>
</dbReference>
<dbReference type="PANTHER" id="PTHR12534:SF0">
    <property type="entry name" value="SMALL RIBOSOMAL SUBUNIT PROTEIN US2M"/>
    <property type="match status" value="1"/>
</dbReference>
<dbReference type="Pfam" id="PF00318">
    <property type="entry name" value="Ribosomal_S2"/>
    <property type="match status" value="1"/>
</dbReference>
<dbReference type="PRINTS" id="PR00395">
    <property type="entry name" value="RIBOSOMALS2"/>
</dbReference>
<dbReference type="SUPFAM" id="SSF52313">
    <property type="entry name" value="Ribosomal protein S2"/>
    <property type="match status" value="1"/>
</dbReference>
<dbReference type="PROSITE" id="PS00962">
    <property type="entry name" value="RIBOSOMAL_S2_1"/>
    <property type="match status" value="1"/>
</dbReference>
<sequence length="228" mass="25956">MMVSMRDMLNAGVHFGHQTRYWNPKMKPFIFGSKNKVHIINLEKTMTMFNFALFELKKISLRKGKILFVGTKQSASKIIKESAILCKQFYVNHRWLGGMLTNWKTVRQSIKRLKDLESQSQDGTFNKLTKKEVLLRMRELSKLENSLGGIKEMGSLPDALFVVDADHEHIAIREANNLGISVFSIVDTNSDPDGVDFIIPGNDDAIRAVNLYLNAVSKVIKKNVKNEK</sequence>
<keyword id="KW-1185">Reference proteome</keyword>
<keyword id="KW-0687">Ribonucleoprotein</keyword>
<keyword id="KW-0689">Ribosomal protein</keyword>
<feature type="chain" id="PRO_0000134144" description="Small ribosomal subunit protein uS2">
    <location>
        <begin position="1"/>
        <end position="228"/>
    </location>
</feature>
<organism>
    <name type="scientific">Buchnera aphidicola subsp. Baizongia pistaciae (strain Bp)</name>
    <dbReference type="NCBI Taxonomy" id="224915"/>
    <lineage>
        <taxon>Bacteria</taxon>
        <taxon>Pseudomonadati</taxon>
        <taxon>Pseudomonadota</taxon>
        <taxon>Gammaproteobacteria</taxon>
        <taxon>Enterobacterales</taxon>
        <taxon>Erwiniaceae</taxon>
        <taxon>Buchnera</taxon>
    </lineage>
</organism>
<evidence type="ECO:0000255" key="1">
    <source>
        <dbReference type="HAMAP-Rule" id="MF_00291"/>
    </source>
</evidence>
<evidence type="ECO:0000305" key="2"/>
<proteinExistence type="inferred from homology"/>
<reference key="1">
    <citation type="journal article" date="2003" name="Proc. Natl. Acad. Sci. U.S.A.">
        <title>Reductive genome evolution in Buchnera aphidicola.</title>
        <authorList>
            <person name="van Ham R.C.H.J."/>
            <person name="Kamerbeek J."/>
            <person name="Palacios C."/>
            <person name="Rausell C."/>
            <person name="Abascal F."/>
            <person name="Bastolla U."/>
            <person name="Fernandez J.M."/>
            <person name="Jimenez L."/>
            <person name="Postigo M."/>
            <person name="Silva F.J."/>
            <person name="Tamames J."/>
            <person name="Viguera E."/>
            <person name="Latorre A."/>
            <person name="Valencia A."/>
            <person name="Moran F."/>
            <person name="Moya A."/>
        </authorList>
    </citation>
    <scope>NUCLEOTIDE SEQUENCE [LARGE SCALE GENOMIC DNA]</scope>
    <source>
        <strain>Bp</strain>
    </source>
</reference>
<comment type="similarity">
    <text evidence="1">Belongs to the universal ribosomal protein uS2 family.</text>
</comment>
<gene>
    <name evidence="1" type="primary">rpsB</name>
    <name type="ordered locus">bbp_213</name>
</gene>